<feature type="chain" id="PRO_0000349075" description="Heme A synthase">
    <location>
        <begin position="1"/>
        <end position="337"/>
    </location>
</feature>
<feature type="transmembrane region" description="Helical" evidence="1">
    <location>
        <begin position="6"/>
        <end position="26"/>
    </location>
</feature>
<feature type="transmembrane region" description="Helical" evidence="1">
    <location>
        <begin position="87"/>
        <end position="107"/>
    </location>
</feature>
<feature type="transmembrane region" description="Helical" evidence="1">
    <location>
        <begin position="119"/>
        <end position="139"/>
    </location>
</feature>
<feature type="transmembrane region" description="Helical" evidence="1">
    <location>
        <begin position="154"/>
        <end position="174"/>
    </location>
</feature>
<feature type="transmembrane region" description="Helical" evidence="1">
    <location>
        <begin position="192"/>
        <end position="212"/>
    </location>
</feature>
<feature type="transmembrane region" description="Helical" evidence="1">
    <location>
        <begin position="258"/>
        <end position="278"/>
    </location>
</feature>
<feature type="transmembrane region" description="Helical" evidence="1">
    <location>
        <begin position="285"/>
        <end position="305"/>
    </location>
</feature>
<feature type="transmembrane region" description="Helical" evidence="1">
    <location>
        <begin position="308"/>
        <end position="328"/>
    </location>
</feature>
<feature type="binding site" description="axial binding residue" evidence="1">
    <location>
        <position position="256"/>
    </location>
    <ligand>
        <name>heme</name>
        <dbReference type="ChEBI" id="CHEBI:30413"/>
    </ligand>
    <ligandPart>
        <name>Fe</name>
        <dbReference type="ChEBI" id="CHEBI:18248"/>
    </ligandPart>
</feature>
<feature type="binding site" description="axial binding residue" evidence="1">
    <location>
        <position position="316"/>
    </location>
    <ligand>
        <name>heme</name>
        <dbReference type="ChEBI" id="CHEBI:30413"/>
    </ligand>
    <ligandPart>
        <name>Fe</name>
        <dbReference type="ChEBI" id="CHEBI:18248"/>
    </ligandPart>
</feature>
<accession>Q92IS7</accession>
<name>CTAA_RICCN</name>
<sequence length="337" mass="38840">MQKSLITKWLCISCIMVIATLVIGGITRLTGSGLSIVEWRPVTGILPPFSFESWQSEFAKYKAFPEYNSVNYGITLSQFKFIYLLEFIHRLLGRITALIYIVPLIYFYFKDVIKNRDMLPYIIALLLFCVQGFIGWYMVKSGLLNSPYVSHFRLAFHLIIAVIIYHILFYQLIKNRCDILLIPSQTDFKLPLIFSGIAITVVYVQIFLGALVAGLDAGLIYNSFPLMDDRFIPMEIKDNFFDLKNWYDPVFIQFIHRLVGYSVFLVVVVLISCLLKIEHPKLNKIAYFLMIALFMQVSTGILTLLYSVPIIIASIHQLFAIILLSIIIWCYFLIKSS</sequence>
<gene>
    <name evidence="1" type="primary">ctaA</name>
    <name type="synonym">coxW</name>
    <name type="ordered locus">RC0343</name>
</gene>
<proteinExistence type="inferred from homology"/>
<organism>
    <name type="scientific">Rickettsia conorii (strain ATCC VR-613 / Malish 7)</name>
    <dbReference type="NCBI Taxonomy" id="272944"/>
    <lineage>
        <taxon>Bacteria</taxon>
        <taxon>Pseudomonadati</taxon>
        <taxon>Pseudomonadota</taxon>
        <taxon>Alphaproteobacteria</taxon>
        <taxon>Rickettsiales</taxon>
        <taxon>Rickettsiaceae</taxon>
        <taxon>Rickettsieae</taxon>
        <taxon>Rickettsia</taxon>
        <taxon>spotted fever group</taxon>
    </lineage>
</organism>
<evidence type="ECO:0000255" key="1">
    <source>
        <dbReference type="HAMAP-Rule" id="MF_01665"/>
    </source>
</evidence>
<keyword id="KW-1003">Cell membrane</keyword>
<keyword id="KW-0350">Heme biosynthesis</keyword>
<keyword id="KW-0408">Iron</keyword>
<keyword id="KW-0472">Membrane</keyword>
<keyword id="KW-0479">Metal-binding</keyword>
<keyword id="KW-0560">Oxidoreductase</keyword>
<keyword id="KW-0812">Transmembrane</keyword>
<keyword id="KW-1133">Transmembrane helix</keyword>
<protein>
    <recommendedName>
        <fullName evidence="1">Heme A synthase</fullName>
        <shortName evidence="1">HAS</shortName>
        <ecNumber evidence="1">1.17.99.9</ecNumber>
    </recommendedName>
    <alternativeName>
        <fullName evidence="1">Cytochrome aa3-controlling protein</fullName>
    </alternativeName>
</protein>
<comment type="function">
    <text evidence="1">Catalyzes the conversion of heme O to heme A by two successive hydroxylations of the methyl group at C8. The first hydroxylation forms heme I, the second hydroxylation results in an unstable dihydroxymethyl group, which spontaneously dehydrates, resulting in the formyl group of heme A.</text>
</comment>
<comment type="catalytic activity">
    <reaction evidence="1">
        <text>Fe(II)-heme o + 2 A + H2O = Fe(II)-heme a + 2 AH2</text>
        <dbReference type="Rhea" id="RHEA:63388"/>
        <dbReference type="ChEBI" id="CHEBI:13193"/>
        <dbReference type="ChEBI" id="CHEBI:15377"/>
        <dbReference type="ChEBI" id="CHEBI:17499"/>
        <dbReference type="ChEBI" id="CHEBI:60530"/>
        <dbReference type="ChEBI" id="CHEBI:61715"/>
        <dbReference type="EC" id="1.17.99.9"/>
    </reaction>
    <physiologicalReaction direction="left-to-right" evidence="1">
        <dbReference type="Rhea" id="RHEA:63389"/>
    </physiologicalReaction>
</comment>
<comment type="cofactor">
    <cofactor evidence="1">
        <name>heme b</name>
        <dbReference type="ChEBI" id="CHEBI:60344"/>
    </cofactor>
</comment>
<comment type="pathway">
    <text evidence="1">Porphyrin-containing compound metabolism; heme A biosynthesis; heme A from heme O: step 1/1.</text>
</comment>
<comment type="subunit">
    <text evidence="1">Interacts with CtaB.</text>
</comment>
<comment type="subcellular location">
    <subcellularLocation>
        <location evidence="1">Cell membrane</location>
        <topology evidence="1">Multi-pass membrane protein</topology>
    </subcellularLocation>
</comment>
<comment type="similarity">
    <text evidence="1">Belongs to the COX15/CtaA family. Type 2 subfamily.</text>
</comment>
<dbReference type="EC" id="1.17.99.9" evidence="1"/>
<dbReference type="EMBL" id="AE006914">
    <property type="protein sequence ID" value="AAL02881.1"/>
    <property type="molecule type" value="Genomic_DNA"/>
</dbReference>
<dbReference type="PIR" id="G97742">
    <property type="entry name" value="G97742"/>
</dbReference>
<dbReference type="RefSeq" id="WP_010976998.1">
    <property type="nucleotide sequence ID" value="NC_003103.1"/>
</dbReference>
<dbReference type="SMR" id="Q92IS7"/>
<dbReference type="GeneID" id="928541"/>
<dbReference type="KEGG" id="rco:RC0343"/>
<dbReference type="PATRIC" id="fig|272944.4.peg.391"/>
<dbReference type="HOGENOM" id="CLU_017627_0_0_5"/>
<dbReference type="UniPathway" id="UPA00269">
    <property type="reaction ID" value="UER00713"/>
</dbReference>
<dbReference type="Proteomes" id="UP000000816">
    <property type="component" value="Chromosome"/>
</dbReference>
<dbReference type="GO" id="GO:0005886">
    <property type="term" value="C:plasma membrane"/>
    <property type="evidence" value="ECO:0007669"/>
    <property type="project" value="UniProtKB-SubCell"/>
</dbReference>
<dbReference type="GO" id="GO:0046872">
    <property type="term" value="F:metal ion binding"/>
    <property type="evidence" value="ECO:0007669"/>
    <property type="project" value="UniProtKB-KW"/>
</dbReference>
<dbReference type="GO" id="GO:0016653">
    <property type="term" value="F:oxidoreductase activity, acting on NAD(P)H, heme protein as acceptor"/>
    <property type="evidence" value="ECO:0007669"/>
    <property type="project" value="InterPro"/>
</dbReference>
<dbReference type="GO" id="GO:0006784">
    <property type="term" value="P:heme A biosynthetic process"/>
    <property type="evidence" value="ECO:0007669"/>
    <property type="project" value="UniProtKB-UniRule"/>
</dbReference>
<dbReference type="HAMAP" id="MF_01665">
    <property type="entry name" value="HemeA_synth_type2"/>
    <property type="match status" value="1"/>
</dbReference>
<dbReference type="InterPro" id="IPR003780">
    <property type="entry name" value="COX15/CtaA_fam"/>
</dbReference>
<dbReference type="InterPro" id="IPR023754">
    <property type="entry name" value="HemeA_Synthase_type2"/>
</dbReference>
<dbReference type="PANTHER" id="PTHR23289">
    <property type="entry name" value="CYTOCHROME C OXIDASE ASSEMBLY PROTEIN COX15"/>
    <property type="match status" value="1"/>
</dbReference>
<dbReference type="PANTHER" id="PTHR23289:SF2">
    <property type="entry name" value="CYTOCHROME C OXIDASE ASSEMBLY PROTEIN COX15 HOMOLOG"/>
    <property type="match status" value="1"/>
</dbReference>
<dbReference type="Pfam" id="PF02628">
    <property type="entry name" value="COX15-CtaA"/>
    <property type="match status" value="1"/>
</dbReference>
<reference key="1">
    <citation type="journal article" date="2001" name="Science">
        <title>Mechanisms of evolution in Rickettsia conorii and R. prowazekii.</title>
        <authorList>
            <person name="Ogata H."/>
            <person name="Audic S."/>
            <person name="Renesto-Audiffren P."/>
            <person name="Fournier P.-E."/>
            <person name="Barbe V."/>
            <person name="Samson D."/>
            <person name="Roux V."/>
            <person name="Cossart P."/>
            <person name="Weissenbach J."/>
            <person name="Claverie J.-M."/>
            <person name="Raoult D."/>
        </authorList>
    </citation>
    <scope>NUCLEOTIDE SEQUENCE [LARGE SCALE GENOMIC DNA]</scope>
    <source>
        <strain>ATCC VR-613 / Malish 7</strain>
    </source>
</reference>